<proteinExistence type="inferred from homology"/>
<name>DLDH_VIBCH</name>
<gene>
    <name type="primary">lpd</name>
    <name type="ordered locus">VC_2412</name>
</gene>
<organism>
    <name type="scientific">Vibrio cholerae serotype O1 (strain ATCC 39315 / El Tor Inaba N16961)</name>
    <dbReference type="NCBI Taxonomy" id="243277"/>
    <lineage>
        <taxon>Bacteria</taxon>
        <taxon>Pseudomonadati</taxon>
        <taxon>Pseudomonadota</taxon>
        <taxon>Gammaproteobacteria</taxon>
        <taxon>Vibrionales</taxon>
        <taxon>Vibrionaceae</taxon>
        <taxon>Vibrio</taxon>
    </lineage>
</organism>
<reference key="1">
    <citation type="journal article" date="2000" name="Nature">
        <title>DNA sequence of both chromosomes of the cholera pathogen Vibrio cholerae.</title>
        <authorList>
            <person name="Heidelberg J.F."/>
            <person name="Eisen J.A."/>
            <person name="Nelson W.C."/>
            <person name="Clayton R.A."/>
            <person name="Gwinn M.L."/>
            <person name="Dodson R.J."/>
            <person name="Haft D.H."/>
            <person name="Hickey E.K."/>
            <person name="Peterson J.D."/>
            <person name="Umayam L.A."/>
            <person name="Gill S.R."/>
            <person name="Nelson K.E."/>
            <person name="Read T.D."/>
            <person name="Tettelin H."/>
            <person name="Richardson D.L."/>
            <person name="Ermolaeva M.D."/>
            <person name="Vamathevan J.J."/>
            <person name="Bass S."/>
            <person name="Qin H."/>
            <person name="Dragoi I."/>
            <person name="Sellers P."/>
            <person name="McDonald L.A."/>
            <person name="Utterback T.R."/>
            <person name="Fleischmann R.D."/>
            <person name="Nierman W.C."/>
            <person name="White O."/>
            <person name="Salzberg S.L."/>
            <person name="Smith H.O."/>
            <person name="Colwell R.R."/>
            <person name="Mekalanos J.J."/>
            <person name="Venter J.C."/>
            <person name="Fraser C.M."/>
        </authorList>
    </citation>
    <scope>NUCLEOTIDE SEQUENCE [LARGE SCALE GENOMIC DNA]</scope>
    <source>
        <strain>ATCC 39315 / El Tor Inaba N16961</strain>
    </source>
</reference>
<feature type="chain" id="PRO_0000068052" description="Dihydrolipoyl dehydrogenase">
    <location>
        <begin position="1"/>
        <end position="475"/>
    </location>
</feature>
<feature type="active site" description="Proton acceptor" evidence="1">
    <location>
        <position position="445"/>
    </location>
</feature>
<feature type="binding site" evidence="1">
    <location>
        <begin position="36"/>
        <end position="45"/>
    </location>
    <ligand>
        <name>FAD</name>
        <dbReference type="ChEBI" id="CHEBI:57692"/>
    </ligand>
</feature>
<feature type="binding site" evidence="1">
    <location>
        <position position="54"/>
    </location>
    <ligand>
        <name>FAD</name>
        <dbReference type="ChEBI" id="CHEBI:57692"/>
    </ligand>
</feature>
<feature type="binding site" evidence="1">
    <location>
        <position position="117"/>
    </location>
    <ligand>
        <name>FAD</name>
        <dbReference type="ChEBI" id="CHEBI:57692"/>
    </ligand>
</feature>
<feature type="binding site" evidence="1">
    <location>
        <begin position="182"/>
        <end position="186"/>
    </location>
    <ligand>
        <name>NAD(+)</name>
        <dbReference type="ChEBI" id="CHEBI:57540"/>
    </ligand>
</feature>
<feature type="binding site" evidence="1">
    <location>
        <position position="205"/>
    </location>
    <ligand>
        <name>NAD(+)</name>
        <dbReference type="ChEBI" id="CHEBI:57540"/>
    </ligand>
</feature>
<feature type="binding site" evidence="1">
    <location>
        <position position="238"/>
    </location>
    <ligand>
        <name>NAD(+)</name>
        <dbReference type="ChEBI" id="CHEBI:57540"/>
    </ligand>
</feature>
<feature type="binding site" evidence="1">
    <location>
        <begin position="270"/>
        <end position="273"/>
    </location>
    <ligand>
        <name>NAD(+)</name>
        <dbReference type="ChEBI" id="CHEBI:57540"/>
    </ligand>
</feature>
<feature type="binding site" evidence="1">
    <location>
        <position position="313"/>
    </location>
    <ligand>
        <name>FAD</name>
        <dbReference type="ChEBI" id="CHEBI:57692"/>
    </ligand>
</feature>
<feature type="binding site" evidence="1">
    <location>
        <position position="321"/>
    </location>
    <ligand>
        <name>FAD</name>
        <dbReference type="ChEBI" id="CHEBI:57692"/>
    </ligand>
</feature>
<feature type="disulfide bond" description="Redox-active" evidence="1">
    <location>
        <begin position="45"/>
        <end position="50"/>
    </location>
</feature>
<dbReference type="EC" id="1.8.1.4"/>
<dbReference type="EMBL" id="AE003852">
    <property type="protein sequence ID" value="AAF95555.1"/>
    <property type="molecule type" value="Genomic_DNA"/>
</dbReference>
<dbReference type="PIR" id="B82079">
    <property type="entry name" value="B82079"/>
</dbReference>
<dbReference type="RefSeq" id="NP_232042.1">
    <property type="nucleotide sequence ID" value="NC_002505.1"/>
</dbReference>
<dbReference type="SMR" id="Q9KPF6"/>
<dbReference type="STRING" id="243277.VC_2412"/>
<dbReference type="DNASU" id="2613081"/>
<dbReference type="EnsemblBacteria" id="AAF95555">
    <property type="protein sequence ID" value="AAF95555"/>
    <property type="gene ID" value="VC_2412"/>
</dbReference>
<dbReference type="KEGG" id="vch:VC_2412"/>
<dbReference type="PATRIC" id="fig|243277.26.peg.2295"/>
<dbReference type="eggNOG" id="COG1249">
    <property type="taxonomic scope" value="Bacteria"/>
</dbReference>
<dbReference type="HOGENOM" id="CLU_016755_0_1_6"/>
<dbReference type="Proteomes" id="UP000000584">
    <property type="component" value="Chromosome 1"/>
</dbReference>
<dbReference type="GO" id="GO:0005737">
    <property type="term" value="C:cytoplasm"/>
    <property type="evidence" value="ECO:0007669"/>
    <property type="project" value="UniProtKB-SubCell"/>
</dbReference>
<dbReference type="GO" id="GO:0004148">
    <property type="term" value="F:dihydrolipoyl dehydrogenase (NADH) activity"/>
    <property type="evidence" value="ECO:0000318"/>
    <property type="project" value="GO_Central"/>
</dbReference>
<dbReference type="GO" id="GO:0050660">
    <property type="term" value="F:flavin adenine dinucleotide binding"/>
    <property type="evidence" value="ECO:0000318"/>
    <property type="project" value="GO_Central"/>
</dbReference>
<dbReference type="GO" id="GO:0006103">
    <property type="term" value="P:2-oxoglutarate metabolic process"/>
    <property type="evidence" value="ECO:0000318"/>
    <property type="project" value="GO_Central"/>
</dbReference>
<dbReference type="GO" id="GO:0006090">
    <property type="term" value="P:pyruvate metabolic process"/>
    <property type="evidence" value="ECO:0000318"/>
    <property type="project" value="GO_Central"/>
</dbReference>
<dbReference type="FunFam" id="3.30.390.30:FF:000001">
    <property type="entry name" value="Dihydrolipoyl dehydrogenase"/>
    <property type="match status" value="1"/>
</dbReference>
<dbReference type="FunFam" id="3.50.50.60:FF:000001">
    <property type="entry name" value="Dihydrolipoyl dehydrogenase, mitochondrial"/>
    <property type="match status" value="1"/>
</dbReference>
<dbReference type="Gene3D" id="3.30.390.30">
    <property type="match status" value="1"/>
</dbReference>
<dbReference type="Gene3D" id="3.50.50.60">
    <property type="entry name" value="FAD/NAD(P)-binding domain"/>
    <property type="match status" value="2"/>
</dbReference>
<dbReference type="InterPro" id="IPR050151">
    <property type="entry name" value="Class-I_Pyr_Nuc-Dis_Oxidored"/>
</dbReference>
<dbReference type="InterPro" id="IPR036188">
    <property type="entry name" value="FAD/NAD-bd_sf"/>
</dbReference>
<dbReference type="InterPro" id="IPR023753">
    <property type="entry name" value="FAD/NAD-binding_dom"/>
</dbReference>
<dbReference type="InterPro" id="IPR016156">
    <property type="entry name" value="FAD/NAD-linked_Rdtase_dimer_sf"/>
</dbReference>
<dbReference type="InterPro" id="IPR006258">
    <property type="entry name" value="Lipoamide_DH"/>
</dbReference>
<dbReference type="InterPro" id="IPR001100">
    <property type="entry name" value="Pyr_nuc-diS_OxRdtase"/>
</dbReference>
<dbReference type="InterPro" id="IPR004099">
    <property type="entry name" value="Pyr_nucl-diS_OxRdtase_dimer"/>
</dbReference>
<dbReference type="InterPro" id="IPR012999">
    <property type="entry name" value="Pyr_OxRdtase_I_AS"/>
</dbReference>
<dbReference type="NCBIfam" id="TIGR01350">
    <property type="entry name" value="lipoamide_DH"/>
    <property type="match status" value="1"/>
</dbReference>
<dbReference type="PANTHER" id="PTHR22912:SF160">
    <property type="entry name" value="DIHYDROLIPOYL DEHYDROGENASE"/>
    <property type="match status" value="1"/>
</dbReference>
<dbReference type="PANTHER" id="PTHR22912">
    <property type="entry name" value="DISULFIDE OXIDOREDUCTASE"/>
    <property type="match status" value="1"/>
</dbReference>
<dbReference type="Pfam" id="PF07992">
    <property type="entry name" value="Pyr_redox_2"/>
    <property type="match status" value="1"/>
</dbReference>
<dbReference type="Pfam" id="PF02852">
    <property type="entry name" value="Pyr_redox_dim"/>
    <property type="match status" value="1"/>
</dbReference>
<dbReference type="PIRSF" id="PIRSF000350">
    <property type="entry name" value="Mercury_reductase_MerA"/>
    <property type="match status" value="1"/>
</dbReference>
<dbReference type="PRINTS" id="PR00368">
    <property type="entry name" value="FADPNR"/>
</dbReference>
<dbReference type="PRINTS" id="PR00411">
    <property type="entry name" value="PNDRDTASEI"/>
</dbReference>
<dbReference type="SUPFAM" id="SSF51905">
    <property type="entry name" value="FAD/NAD(P)-binding domain"/>
    <property type="match status" value="1"/>
</dbReference>
<dbReference type="SUPFAM" id="SSF55424">
    <property type="entry name" value="FAD/NAD-linked reductases, dimerisation (C-terminal) domain"/>
    <property type="match status" value="1"/>
</dbReference>
<dbReference type="PROSITE" id="PS00076">
    <property type="entry name" value="PYRIDINE_REDOX_1"/>
    <property type="match status" value="1"/>
</dbReference>
<keyword id="KW-0963">Cytoplasm</keyword>
<keyword id="KW-1015">Disulfide bond</keyword>
<keyword id="KW-0274">FAD</keyword>
<keyword id="KW-0285">Flavoprotein</keyword>
<keyword id="KW-0520">NAD</keyword>
<keyword id="KW-0560">Oxidoreductase</keyword>
<keyword id="KW-0676">Redox-active center</keyword>
<keyword id="KW-1185">Reference proteome</keyword>
<comment type="function">
    <text evidence="1">The branched-chain alpha-keto dehydrogenase complex catalyzes the overall conversion of alpha-keto acids to acyl-CoA and CO(2). It contains multiple copies of 3 enzymatic components: branched-chain alpha-keto acid decarboxylase (E1), lipoamide acyltransferase (E2) and lipoamide dehydrogenase (E3) (By similarity).</text>
</comment>
<comment type="catalytic activity">
    <reaction>
        <text>N(6)-[(R)-dihydrolipoyl]-L-lysyl-[protein] + NAD(+) = N(6)-[(R)-lipoyl]-L-lysyl-[protein] + NADH + H(+)</text>
        <dbReference type="Rhea" id="RHEA:15045"/>
        <dbReference type="Rhea" id="RHEA-COMP:10474"/>
        <dbReference type="Rhea" id="RHEA-COMP:10475"/>
        <dbReference type="ChEBI" id="CHEBI:15378"/>
        <dbReference type="ChEBI" id="CHEBI:57540"/>
        <dbReference type="ChEBI" id="CHEBI:57945"/>
        <dbReference type="ChEBI" id="CHEBI:83099"/>
        <dbReference type="ChEBI" id="CHEBI:83100"/>
        <dbReference type="EC" id="1.8.1.4"/>
    </reaction>
</comment>
<comment type="cofactor">
    <cofactor evidence="1">
        <name>FAD</name>
        <dbReference type="ChEBI" id="CHEBI:57692"/>
    </cofactor>
    <text evidence="1">Binds 1 FAD per subunit.</text>
</comment>
<comment type="subcellular location">
    <subcellularLocation>
        <location evidence="1">Cytoplasm</location>
    </subcellularLocation>
</comment>
<comment type="miscellaneous">
    <text>The active site is a redox-active disulfide bond.</text>
</comment>
<comment type="similarity">
    <text evidence="2">Belongs to the class-I pyridine nucleotide-disulfide oxidoreductase family.</text>
</comment>
<sequence length="475" mass="50995">MSKEIKAQVVVLGAGPAGYSAAFRCADLGLDTVIIERYNTLGGVCLNVGCIPSKALLHVAKVIEEAKALTEHGIVFGEPKTDIDKVRLWKEKVINQLTGGLAGMAKMRKVNVVNGYGKFTGPNTIEVDGEEGKTVVTFDNAIVAAGSRPIKLPFIPHEDPRIWDSTDALELKEVPGKLLIMGGGIIGLEMATVYHSLGSKIDVVEMFDQLIPAADKDMVKVYTKRIKDKFNLMLETKVTAVEAKEDGIYVSMEGKSAPAQAERYDAVLVAIGRVPNGKLLDAEKAGLEVDERGFIRVDKQMRTNVPHIFAIGDIVGQPMLAHKGVHEGHVAAEVISGKKHYFDPKVIPSIAYTEPEVAWVGKTEKEAKAEGINYEVATFPWAASGRAIASDCADGMTKLIFDKETHRVIGGAIVGTNGGELLGEIGLAIEMGCDAEDIALTIHAHPTLHESVGLAAEVFEGTITDLPNAKAKKKK</sequence>
<evidence type="ECO:0000250" key="1"/>
<evidence type="ECO:0000305" key="2"/>
<protein>
    <recommendedName>
        <fullName>Dihydrolipoyl dehydrogenase</fullName>
        <ecNumber>1.8.1.4</ecNumber>
    </recommendedName>
    <alternativeName>
        <fullName>Dihydrolipoamide dehydrogenase</fullName>
    </alternativeName>
    <alternativeName>
        <fullName>E3 component of 2-oxoglutarate dehydrogenase complex</fullName>
    </alternativeName>
</protein>
<accession>Q9KPF6</accession>